<organism>
    <name type="scientific">Synechococcus sp. (strain CC9311)</name>
    <dbReference type="NCBI Taxonomy" id="64471"/>
    <lineage>
        <taxon>Bacteria</taxon>
        <taxon>Bacillati</taxon>
        <taxon>Cyanobacteriota</taxon>
        <taxon>Cyanophyceae</taxon>
        <taxon>Synechococcales</taxon>
        <taxon>Synechococcaceae</taxon>
        <taxon>Synechococcus</taxon>
    </lineage>
</organism>
<keyword id="KW-0328">Glycosyltransferase</keyword>
<keyword id="KW-0479">Metal-binding</keyword>
<keyword id="KW-0671">Queuosine biosynthesis</keyword>
<keyword id="KW-1185">Reference proteome</keyword>
<keyword id="KW-0808">Transferase</keyword>
<keyword id="KW-0819">tRNA processing</keyword>
<keyword id="KW-0862">Zinc</keyword>
<evidence type="ECO:0000255" key="1">
    <source>
        <dbReference type="HAMAP-Rule" id="MF_00168"/>
    </source>
</evidence>
<protein>
    <recommendedName>
        <fullName evidence="1">Queuine tRNA-ribosyltransferase</fullName>
        <ecNumber evidence="1">2.4.2.29</ecNumber>
    </recommendedName>
    <alternativeName>
        <fullName evidence="1">Guanine insertion enzyme</fullName>
    </alternativeName>
    <alternativeName>
        <fullName evidence="1">tRNA-guanine transglycosylase</fullName>
    </alternativeName>
</protein>
<comment type="function">
    <text evidence="1">Catalyzes the base-exchange of a guanine (G) residue with the queuine precursor 7-aminomethyl-7-deazaguanine (PreQ1) at position 34 (anticodon wobble position) in tRNAs with GU(N) anticodons (tRNA-Asp, -Asn, -His and -Tyr). Catalysis occurs through a double-displacement mechanism. The nucleophile active site attacks the C1' of nucleotide 34 to detach the guanine base from the RNA, forming a covalent enzyme-RNA intermediate. The proton acceptor active site deprotonates the incoming PreQ1, allowing a nucleophilic attack on the C1' of the ribose to form the product. After dissociation, two additional enzymatic reactions on the tRNA convert PreQ1 to queuine (Q), resulting in the hypermodified nucleoside queuosine (7-(((4,5-cis-dihydroxy-2-cyclopenten-1-yl)amino)methyl)-7-deazaguanosine).</text>
</comment>
<comment type="catalytic activity">
    <reaction evidence="1">
        <text>7-aminomethyl-7-carbaguanine + guanosine(34) in tRNA = 7-aminomethyl-7-carbaguanosine(34) in tRNA + guanine</text>
        <dbReference type="Rhea" id="RHEA:24104"/>
        <dbReference type="Rhea" id="RHEA-COMP:10341"/>
        <dbReference type="Rhea" id="RHEA-COMP:10342"/>
        <dbReference type="ChEBI" id="CHEBI:16235"/>
        <dbReference type="ChEBI" id="CHEBI:58703"/>
        <dbReference type="ChEBI" id="CHEBI:74269"/>
        <dbReference type="ChEBI" id="CHEBI:82833"/>
        <dbReference type="EC" id="2.4.2.29"/>
    </reaction>
</comment>
<comment type="cofactor">
    <cofactor evidence="1">
        <name>Zn(2+)</name>
        <dbReference type="ChEBI" id="CHEBI:29105"/>
    </cofactor>
    <text evidence="1">Binds 1 zinc ion per subunit.</text>
</comment>
<comment type="pathway">
    <text evidence="1">tRNA modification; tRNA-queuosine biosynthesis.</text>
</comment>
<comment type="subunit">
    <text evidence="1">Homodimer. Within each dimer, one monomer is responsible for RNA recognition and catalysis, while the other monomer binds to the replacement base PreQ1.</text>
</comment>
<comment type="similarity">
    <text evidence="1">Belongs to the queuine tRNA-ribosyltransferase family.</text>
</comment>
<proteinExistence type="inferred from homology"/>
<reference key="1">
    <citation type="journal article" date="2006" name="Proc. Natl. Acad. Sci. U.S.A.">
        <title>Genome sequence of Synechococcus CC9311: insights into adaptation to a coastal environment.</title>
        <authorList>
            <person name="Palenik B."/>
            <person name="Ren Q."/>
            <person name="Dupont C.L."/>
            <person name="Myers G.S."/>
            <person name="Heidelberg J.F."/>
            <person name="Badger J.H."/>
            <person name="Madupu R."/>
            <person name="Nelson W.C."/>
            <person name="Brinkac L.M."/>
            <person name="Dodson R.J."/>
            <person name="Durkin A.S."/>
            <person name="Daugherty S.C."/>
            <person name="Sullivan S.A."/>
            <person name="Khouri H."/>
            <person name="Mohamoud Y."/>
            <person name="Halpin R."/>
            <person name="Paulsen I.T."/>
        </authorList>
    </citation>
    <scope>NUCLEOTIDE SEQUENCE [LARGE SCALE GENOMIC DNA]</scope>
    <source>
        <strain>CC9311</strain>
    </source>
</reference>
<accession>Q0IDF3</accession>
<gene>
    <name evidence="1" type="primary">tgt</name>
    <name type="ordered locus">sync_0284</name>
</gene>
<sequence length="372" mass="41034">MFQFEIQATCSNTGARCGCFHTPHGPVTTPRFMPVGTLGTVKGVTTSQLAETGAQMVLSNTYHLHLQPGEEIVADAGGLHRFMGWDGPMLTDSGGFQVFSLGDLNRIDDEGVDFRNPRNGSRILLTPERSMQIQMRLGADVAMAFDQCPPYPATENDVAEACRRTHAWLGRCADAHQRDDQALFGIVQGGCFPHLRDLSARTVASFNLPGIAIGGVSVGEPVEEMHQIVRQVTPLLPADRPRYLMGIGTLREMAVAVANGIDMFDCVLPTRLGRHGTALVGGERWNLRNARFRHDHTPLDPNCPCIACRQHTRAYLHHLIRSEELLGLTLLSIHNLTHLIRFTTAMGQAIRDGCFSEDFAPWEPSSRAHHTW</sequence>
<name>TGT_SYNS3</name>
<feature type="chain" id="PRO_1000016881" description="Queuine tRNA-ribosyltransferase">
    <location>
        <begin position="1"/>
        <end position="372"/>
    </location>
</feature>
<feature type="region of interest" description="RNA binding" evidence="1">
    <location>
        <begin position="246"/>
        <end position="252"/>
    </location>
</feature>
<feature type="region of interest" description="RNA binding; important for wobble base 34 recognition" evidence="1">
    <location>
        <begin position="270"/>
        <end position="274"/>
    </location>
</feature>
<feature type="active site" description="Proton acceptor" evidence="1">
    <location>
        <position position="92"/>
    </location>
</feature>
<feature type="active site" description="Nucleophile" evidence="1">
    <location>
        <position position="265"/>
    </location>
</feature>
<feature type="binding site" evidence="1">
    <location>
        <begin position="92"/>
        <end position="96"/>
    </location>
    <ligand>
        <name>substrate</name>
    </ligand>
</feature>
<feature type="binding site" evidence="1">
    <location>
        <position position="146"/>
    </location>
    <ligand>
        <name>substrate</name>
    </ligand>
</feature>
<feature type="binding site" evidence="1">
    <location>
        <position position="188"/>
    </location>
    <ligand>
        <name>substrate</name>
    </ligand>
</feature>
<feature type="binding site" evidence="1">
    <location>
        <position position="215"/>
    </location>
    <ligand>
        <name>substrate</name>
    </ligand>
</feature>
<feature type="binding site" evidence="1">
    <location>
        <position position="303"/>
    </location>
    <ligand>
        <name>Zn(2+)</name>
        <dbReference type="ChEBI" id="CHEBI:29105"/>
    </ligand>
</feature>
<feature type="binding site" evidence="1">
    <location>
        <position position="305"/>
    </location>
    <ligand>
        <name>Zn(2+)</name>
        <dbReference type="ChEBI" id="CHEBI:29105"/>
    </ligand>
</feature>
<feature type="binding site" evidence="1">
    <location>
        <position position="308"/>
    </location>
    <ligand>
        <name>Zn(2+)</name>
        <dbReference type="ChEBI" id="CHEBI:29105"/>
    </ligand>
</feature>
<feature type="binding site" evidence="1">
    <location>
        <position position="334"/>
    </location>
    <ligand>
        <name>Zn(2+)</name>
        <dbReference type="ChEBI" id="CHEBI:29105"/>
    </ligand>
</feature>
<dbReference type="EC" id="2.4.2.29" evidence="1"/>
<dbReference type="EMBL" id="CP000435">
    <property type="protein sequence ID" value="ABI46127.1"/>
    <property type="molecule type" value="Genomic_DNA"/>
</dbReference>
<dbReference type="RefSeq" id="WP_011618264.1">
    <property type="nucleotide sequence ID" value="NC_008319.1"/>
</dbReference>
<dbReference type="SMR" id="Q0IDF3"/>
<dbReference type="STRING" id="64471.sync_0284"/>
<dbReference type="KEGG" id="syg:sync_0284"/>
<dbReference type="eggNOG" id="COG0343">
    <property type="taxonomic scope" value="Bacteria"/>
</dbReference>
<dbReference type="HOGENOM" id="CLU_022060_0_1_3"/>
<dbReference type="OrthoDB" id="9805417at2"/>
<dbReference type="UniPathway" id="UPA00392"/>
<dbReference type="Proteomes" id="UP000001961">
    <property type="component" value="Chromosome"/>
</dbReference>
<dbReference type="GO" id="GO:0005829">
    <property type="term" value="C:cytosol"/>
    <property type="evidence" value="ECO:0007669"/>
    <property type="project" value="TreeGrafter"/>
</dbReference>
<dbReference type="GO" id="GO:0046872">
    <property type="term" value="F:metal ion binding"/>
    <property type="evidence" value="ECO:0007669"/>
    <property type="project" value="UniProtKB-KW"/>
</dbReference>
<dbReference type="GO" id="GO:0008479">
    <property type="term" value="F:tRNA-guanosine(34) queuine transglycosylase activity"/>
    <property type="evidence" value="ECO:0007669"/>
    <property type="project" value="UniProtKB-UniRule"/>
</dbReference>
<dbReference type="GO" id="GO:0008616">
    <property type="term" value="P:queuosine biosynthetic process"/>
    <property type="evidence" value="ECO:0007669"/>
    <property type="project" value="UniProtKB-UniRule"/>
</dbReference>
<dbReference type="GO" id="GO:0002099">
    <property type="term" value="P:tRNA wobble guanine modification"/>
    <property type="evidence" value="ECO:0007669"/>
    <property type="project" value="TreeGrafter"/>
</dbReference>
<dbReference type="GO" id="GO:0101030">
    <property type="term" value="P:tRNA-guanine transglycosylation"/>
    <property type="evidence" value="ECO:0007669"/>
    <property type="project" value="InterPro"/>
</dbReference>
<dbReference type="FunFam" id="3.20.20.105:FF:000001">
    <property type="entry name" value="Queuine tRNA-ribosyltransferase"/>
    <property type="match status" value="1"/>
</dbReference>
<dbReference type="Gene3D" id="3.20.20.105">
    <property type="entry name" value="Queuine tRNA-ribosyltransferase-like"/>
    <property type="match status" value="1"/>
</dbReference>
<dbReference type="HAMAP" id="MF_00168">
    <property type="entry name" value="Q_tRNA_Tgt"/>
    <property type="match status" value="1"/>
</dbReference>
<dbReference type="InterPro" id="IPR050076">
    <property type="entry name" value="ArchSynthase1/Queuine_TRR"/>
</dbReference>
<dbReference type="InterPro" id="IPR004803">
    <property type="entry name" value="TGT"/>
</dbReference>
<dbReference type="InterPro" id="IPR036511">
    <property type="entry name" value="TGT-like_sf"/>
</dbReference>
<dbReference type="InterPro" id="IPR002616">
    <property type="entry name" value="tRNA_ribo_trans-like"/>
</dbReference>
<dbReference type="NCBIfam" id="TIGR00430">
    <property type="entry name" value="Q_tRNA_tgt"/>
    <property type="match status" value="1"/>
</dbReference>
<dbReference type="NCBIfam" id="TIGR00449">
    <property type="entry name" value="tgt_general"/>
    <property type="match status" value="1"/>
</dbReference>
<dbReference type="PANTHER" id="PTHR46499">
    <property type="entry name" value="QUEUINE TRNA-RIBOSYLTRANSFERASE"/>
    <property type="match status" value="1"/>
</dbReference>
<dbReference type="PANTHER" id="PTHR46499:SF1">
    <property type="entry name" value="QUEUINE TRNA-RIBOSYLTRANSFERASE"/>
    <property type="match status" value="1"/>
</dbReference>
<dbReference type="Pfam" id="PF01702">
    <property type="entry name" value="TGT"/>
    <property type="match status" value="1"/>
</dbReference>
<dbReference type="SUPFAM" id="SSF51713">
    <property type="entry name" value="tRNA-guanine transglycosylase"/>
    <property type="match status" value="1"/>
</dbReference>